<comment type="function">
    <text evidence="2">Involved in the maturation of [NiFe] hydrogenases. Required for nickel insertion into the metal center of the hydrogenase. HybF is involved in maturation of hydrogenases 1 and 2. It may partially substitute for the function of HypA and vice versa.</text>
</comment>
<comment type="subunit">
    <text evidence="3">Monomer.</text>
</comment>
<comment type="disruption phenotype">
    <text evidence="2">Deletion of the gene severely reduces hydrogenase 1 and hydrogenase 2 activity (PubMed:12081959). HypA-hybF double mutant is completely blocked in maturation of hydrogenases 1, 2 and 3. However, the inclusion of high nickel concentrations in the medium can restore limited activity of all three hydrogenases (PubMed:12081959).</text>
</comment>
<comment type="similarity">
    <text evidence="1 5">Belongs to the HypA/HybF family. HybF subfamily.</text>
</comment>
<comment type="sequence caution" evidence="5">
    <conflict type="erroneous translation">
        <sequence resource="EMBL-CDS" id="AAA21594"/>
    </conflict>
    <text>Wrong choice of frame.</text>
</comment>
<accession>P0A703</accession>
<accession>P37184</accession>
<accession>Q2M9K4</accession>
<accession>Q46846</accession>
<proteinExistence type="evidence at protein level"/>
<organism>
    <name type="scientific">Escherichia coli (strain K12)</name>
    <dbReference type="NCBI Taxonomy" id="83333"/>
    <lineage>
        <taxon>Bacteria</taxon>
        <taxon>Pseudomonadati</taxon>
        <taxon>Pseudomonadota</taxon>
        <taxon>Gammaproteobacteria</taxon>
        <taxon>Enterobacterales</taxon>
        <taxon>Enterobacteriaceae</taxon>
        <taxon>Escherichia</taxon>
    </lineage>
</organism>
<feature type="chain" id="PRO_0000129063" description="Hydrogenase maturation factor HybF">
    <location>
        <begin position="1"/>
        <end position="113"/>
    </location>
</feature>
<feature type="binding site" evidence="1 6">
    <location>
        <position position="2"/>
    </location>
    <ligand>
        <name>Ni(2+)</name>
        <dbReference type="ChEBI" id="CHEBI:49786"/>
    </ligand>
</feature>
<feature type="binding site" evidence="1 6">
    <location>
        <position position="3"/>
    </location>
    <ligand>
        <name>Ni(2+)</name>
        <dbReference type="ChEBI" id="CHEBI:49786"/>
    </ligand>
</feature>
<feature type="binding site" evidence="1 6">
    <location>
        <position position="73"/>
    </location>
    <ligand>
        <name>Zn(2+)</name>
        <dbReference type="ChEBI" id="CHEBI:29105"/>
    </ligand>
</feature>
<feature type="binding site" evidence="1 6">
    <location>
        <position position="76"/>
    </location>
    <ligand>
        <name>Zn(2+)</name>
        <dbReference type="ChEBI" id="CHEBI:29105"/>
    </ligand>
</feature>
<feature type="binding site" evidence="1 6">
    <location>
        <position position="89"/>
    </location>
    <ligand>
        <name>Zn(2+)</name>
        <dbReference type="ChEBI" id="CHEBI:29105"/>
    </ligand>
</feature>
<feature type="binding site" evidence="1 6">
    <location>
        <position position="92"/>
    </location>
    <ligand>
        <name>Zn(2+)</name>
        <dbReference type="ChEBI" id="CHEBI:29105"/>
    </ligand>
</feature>
<feature type="mutagenesis site" description="Loss of activity." evidence="3">
    <original>H</original>
    <variation>A</variation>
    <location>
        <position position="2"/>
    </location>
</feature>
<feature type="mutagenesis site" description="Loss of activity. Does not affect the amount of zinc, but shows a strong decrease in nickel content." evidence="3">
    <original>H</original>
    <variation>Q</variation>
    <location>
        <position position="2"/>
    </location>
</feature>
<feature type="mutagenesis site" description="Loss of activity." evidence="3">
    <original>E</original>
    <variation>L</variation>
    <location>
        <position position="3"/>
    </location>
</feature>
<feature type="mutagenesis site" description="Does not affect activity." evidence="3">
    <original>E</original>
    <variation>Q</variation>
    <location>
        <position position="3"/>
    </location>
</feature>
<feature type="mutagenesis site" description="Affects stability and solubility of the protein, but mutant is still active." evidence="3">
    <original>C</original>
    <variation>A</variation>
    <location>
        <position position="73"/>
    </location>
</feature>
<feature type="mutagenesis site" description="Affects stability and solubility of the protein, but mutant is still active." evidence="3">
    <original>C</original>
    <variation>A</variation>
    <location>
        <position position="76"/>
    </location>
</feature>
<feature type="mutagenesis site" description="Affects stability and solubility of the protein, but mutant is still active." evidence="3">
    <original>C</original>
    <variation>A</variation>
    <variation>S</variation>
    <location>
        <position position="89"/>
    </location>
</feature>
<feature type="mutagenesis site" description="Does not affect activity." evidence="3">
    <original>P</original>
    <variation>A</variation>
    <location>
        <position position="90"/>
    </location>
</feature>
<feature type="mutagenesis site" description="Affects stability and solubility of the protein, but mutant is still active." evidence="3">
    <original>C</original>
    <variation>A</variation>
    <location>
        <position position="92"/>
    </location>
</feature>
<name>HYBF_ECOLI</name>
<gene>
    <name evidence="1 4" type="primary">hybF</name>
    <name type="ordered locus">b2991</name>
    <name type="ordered locus">JW5493</name>
</gene>
<keyword id="KW-0479">Metal-binding</keyword>
<keyword id="KW-0533">Nickel</keyword>
<keyword id="KW-1185">Reference proteome</keyword>
<keyword id="KW-0862">Zinc</keyword>
<evidence type="ECO:0000255" key="1">
    <source>
        <dbReference type="HAMAP-Rule" id="MF_02099"/>
    </source>
</evidence>
<evidence type="ECO:0000269" key="2">
    <source>
    </source>
</evidence>
<evidence type="ECO:0000269" key="3">
    <source>
    </source>
</evidence>
<evidence type="ECO:0000303" key="4">
    <source>
    </source>
</evidence>
<evidence type="ECO:0000305" key="5"/>
<evidence type="ECO:0000305" key="6">
    <source>
    </source>
</evidence>
<protein>
    <recommendedName>
        <fullName evidence="1 5">Hydrogenase maturation factor HybF</fullName>
    </recommendedName>
    <alternativeName>
        <fullName evidence="5">Hydrogenase nickel incorporation protein HybF</fullName>
    </alternativeName>
    <alternativeName>
        <fullName evidence="5">Hydrogenase-2 operon protein HybF</fullName>
    </alternativeName>
</protein>
<sequence length="113" mass="12697">MHELSLCQSAVEIIQRQAEQHDVKRVTAVWLEIGALSCVEESAVRFSFEIVCHGTVAQGCDLHIVYKPAQAWCWDCSQVVEIHQHDAQCPLCHGERLRVDTGDSLIVKSIEVE</sequence>
<dbReference type="EMBL" id="U09177">
    <property type="protein sequence ID" value="AAA21594.1"/>
    <property type="status" value="ALT_SEQ"/>
    <property type="molecule type" value="Genomic_DNA"/>
</dbReference>
<dbReference type="EMBL" id="U28377">
    <property type="protein sequence ID" value="AAA69158.1"/>
    <property type="molecule type" value="Genomic_DNA"/>
</dbReference>
<dbReference type="EMBL" id="U00096">
    <property type="protein sequence ID" value="AAC76027.1"/>
    <property type="molecule type" value="Genomic_DNA"/>
</dbReference>
<dbReference type="EMBL" id="AP009048">
    <property type="protein sequence ID" value="BAE77052.1"/>
    <property type="molecule type" value="Genomic_DNA"/>
</dbReference>
<dbReference type="PIR" id="F55516">
    <property type="entry name" value="F55516"/>
</dbReference>
<dbReference type="RefSeq" id="NP_417465.1">
    <property type="nucleotide sequence ID" value="NC_000913.3"/>
</dbReference>
<dbReference type="SMR" id="P0A703"/>
<dbReference type="BioGRID" id="4261537">
    <property type="interactions" value="5"/>
</dbReference>
<dbReference type="FunCoup" id="P0A703">
    <property type="interactions" value="27"/>
</dbReference>
<dbReference type="IntAct" id="P0A703">
    <property type="interactions" value="1"/>
</dbReference>
<dbReference type="STRING" id="511145.b2991"/>
<dbReference type="TCDB" id="3.D.7.2.5">
    <property type="family name" value="the h2:heterodisulfide oxidoreductase (hho) family"/>
</dbReference>
<dbReference type="PaxDb" id="511145-b2991"/>
<dbReference type="EnsemblBacteria" id="AAC76027">
    <property type="protein sequence ID" value="AAC76027"/>
    <property type="gene ID" value="b2991"/>
</dbReference>
<dbReference type="GeneID" id="948004"/>
<dbReference type="KEGG" id="ecj:JW5493"/>
<dbReference type="KEGG" id="eco:b2991"/>
<dbReference type="KEGG" id="ecoc:C3026_16360"/>
<dbReference type="PATRIC" id="fig|1411691.4.peg.3738"/>
<dbReference type="EchoBASE" id="EB1752"/>
<dbReference type="eggNOG" id="COG0375">
    <property type="taxonomic scope" value="Bacteria"/>
</dbReference>
<dbReference type="HOGENOM" id="CLU_126929_0_0_6"/>
<dbReference type="InParanoid" id="P0A703"/>
<dbReference type="OMA" id="ILLCPCG"/>
<dbReference type="OrthoDB" id="288014at2"/>
<dbReference type="PhylomeDB" id="P0A703"/>
<dbReference type="BioCyc" id="EcoCyc:EG11804-MONOMER"/>
<dbReference type="PRO" id="PR:P0A703"/>
<dbReference type="Proteomes" id="UP000000625">
    <property type="component" value="Chromosome"/>
</dbReference>
<dbReference type="GO" id="GO:0016530">
    <property type="term" value="F:metallochaperone activity"/>
    <property type="evidence" value="ECO:0000315"/>
    <property type="project" value="EcoCyc"/>
</dbReference>
<dbReference type="GO" id="GO:0016151">
    <property type="term" value="F:nickel cation binding"/>
    <property type="evidence" value="ECO:0000314"/>
    <property type="project" value="EcoCyc"/>
</dbReference>
<dbReference type="GO" id="GO:0008270">
    <property type="term" value="F:zinc ion binding"/>
    <property type="evidence" value="ECO:0000314"/>
    <property type="project" value="EcoCyc"/>
</dbReference>
<dbReference type="GO" id="GO:0051604">
    <property type="term" value="P:protein maturation"/>
    <property type="evidence" value="ECO:0000315"/>
    <property type="project" value="EcoCyc"/>
</dbReference>
<dbReference type="GO" id="GO:0036211">
    <property type="term" value="P:protein modification process"/>
    <property type="evidence" value="ECO:0007669"/>
    <property type="project" value="UniProtKB-UniRule"/>
</dbReference>
<dbReference type="FunFam" id="3.30.2320.80:FF:000001">
    <property type="entry name" value="Hydrogenase maturation factor HypA"/>
    <property type="match status" value="1"/>
</dbReference>
<dbReference type="Gene3D" id="3.30.2320.80">
    <property type="match status" value="1"/>
</dbReference>
<dbReference type="HAMAP" id="MF_02099">
    <property type="entry name" value="HybF_subfam"/>
    <property type="match status" value="1"/>
</dbReference>
<dbReference type="HAMAP" id="MF_00213">
    <property type="entry name" value="HypA_HybF"/>
    <property type="match status" value="1"/>
</dbReference>
<dbReference type="InterPro" id="IPR039002">
    <property type="entry name" value="HybF"/>
</dbReference>
<dbReference type="InterPro" id="IPR020538">
    <property type="entry name" value="Hydgase_Ni_incorp_HypA/HybF_CS"/>
</dbReference>
<dbReference type="InterPro" id="IPR000688">
    <property type="entry name" value="HypA/HybF"/>
</dbReference>
<dbReference type="NCBIfam" id="TIGR00100">
    <property type="entry name" value="hypA"/>
    <property type="match status" value="1"/>
</dbReference>
<dbReference type="NCBIfam" id="NF002979">
    <property type="entry name" value="PRK03681.1"/>
    <property type="match status" value="1"/>
</dbReference>
<dbReference type="NCBIfam" id="NF009046">
    <property type="entry name" value="PRK12380.1"/>
    <property type="match status" value="1"/>
</dbReference>
<dbReference type="PANTHER" id="PTHR34535:SF4">
    <property type="entry name" value="HYDROGENASE MATURATION FACTOR HYBF"/>
    <property type="match status" value="1"/>
</dbReference>
<dbReference type="PANTHER" id="PTHR34535">
    <property type="entry name" value="HYDROGENASE MATURATION FACTOR HYPA"/>
    <property type="match status" value="1"/>
</dbReference>
<dbReference type="Pfam" id="PF01155">
    <property type="entry name" value="HypA"/>
    <property type="match status" value="1"/>
</dbReference>
<dbReference type="PIRSF" id="PIRSF004761">
    <property type="entry name" value="Hydrgn_mat_HypA"/>
    <property type="match status" value="1"/>
</dbReference>
<dbReference type="PROSITE" id="PS01249">
    <property type="entry name" value="HYPA"/>
    <property type="match status" value="1"/>
</dbReference>
<reference key="1">
    <citation type="journal article" date="1994" name="J. Bacteriol.">
        <title>Cloning, sequencing, and mutational analysis of the hyb operon encoding Escherichia coli hydrogenase 2.</title>
        <authorList>
            <person name="Menon N.K."/>
            <person name="Chatelus C.Y."/>
            <person name="Dervartanian M."/>
            <person name="Wendt J.C."/>
            <person name="Shanmugam K.T."/>
            <person name="Peck H.D. Jr."/>
            <person name="Przybyla A.E."/>
        </authorList>
    </citation>
    <scope>NUCLEOTIDE SEQUENCE [GENOMIC DNA]</scope>
    <source>
        <strain>K12 / TG1</strain>
    </source>
</reference>
<reference key="2">
    <citation type="journal article" date="1997" name="Science">
        <title>The complete genome sequence of Escherichia coli K-12.</title>
        <authorList>
            <person name="Blattner F.R."/>
            <person name="Plunkett G. III"/>
            <person name="Bloch C.A."/>
            <person name="Perna N.T."/>
            <person name="Burland V."/>
            <person name="Riley M."/>
            <person name="Collado-Vides J."/>
            <person name="Glasner J.D."/>
            <person name="Rode C.K."/>
            <person name="Mayhew G.F."/>
            <person name="Gregor J."/>
            <person name="Davis N.W."/>
            <person name="Kirkpatrick H.A."/>
            <person name="Goeden M.A."/>
            <person name="Rose D.J."/>
            <person name="Mau B."/>
            <person name="Shao Y."/>
        </authorList>
    </citation>
    <scope>NUCLEOTIDE SEQUENCE [LARGE SCALE GENOMIC DNA]</scope>
    <source>
        <strain>K12 / MG1655 / ATCC 47076</strain>
    </source>
</reference>
<reference key="3">
    <citation type="journal article" date="2006" name="Mol. Syst. Biol.">
        <title>Highly accurate genome sequences of Escherichia coli K-12 strains MG1655 and W3110.</title>
        <authorList>
            <person name="Hayashi K."/>
            <person name="Morooka N."/>
            <person name="Yamamoto Y."/>
            <person name="Fujita K."/>
            <person name="Isono K."/>
            <person name="Choi S."/>
            <person name="Ohtsubo E."/>
            <person name="Baba T."/>
            <person name="Wanner B.L."/>
            <person name="Mori H."/>
            <person name="Horiuchi T."/>
        </authorList>
    </citation>
    <scope>NUCLEOTIDE SEQUENCE [LARGE SCALE GENOMIC DNA]</scope>
    <source>
        <strain>K12 / W3110 / ATCC 27325 / DSM 5911</strain>
    </source>
</reference>
<reference key="4">
    <citation type="journal article" date="2002" name="J. Bacteriol.">
        <title>Network of hydrogenase maturation in Escherichia coli: role of accessory proteins HypA and HybF.</title>
        <authorList>
            <person name="Hube M."/>
            <person name="Blokesch M."/>
            <person name="Boeck A."/>
        </authorList>
    </citation>
    <scope>FUNCTION</scope>
    <scope>DISRUPTION PHENOTYPE</scope>
    <source>
        <strain>K12 / MC4100 / ATCC 35695 / DSM 6574</strain>
    </source>
</reference>
<reference key="5">
    <citation type="journal article" date="2004" name="J. Bacteriol.">
        <title>HybF, a zinc-containing protein involved in NiFe hydrogenase maturation.</title>
        <authorList>
            <person name="Blokesch M."/>
            <person name="Rohrmoser M."/>
            <person name="Rode S."/>
            <person name="Boeck A."/>
        </authorList>
    </citation>
    <scope>SUBUNIT</scope>
    <scope>NICKEL-BINDING</scope>
    <scope>ZINC-BINDING</scope>
    <scope>MUTAGENESIS OF HIS-2; GLU-3; CYS-73; CYS-76; CYS-89; PRO-90 AND CYS-92</scope>
</reference>